<dbReference type="EC" id="7.1.2.2" evidence="1"/>
<dbReference type="EMBL" id="CP000437">
    <property type="protein sequence ID" value="ABI83502.1"/>
    <property type="molecule type" value="Genomic_DNA"/>
</dbReference>
<dbReference type="RefSeq" id="WP_003017337.1">
    <property type="nucleotide sequence ID" value="NC_017463.1"/>
</dbReference>
<dbReference type="SMR" id="Q0BK82"/>
<dbReference type="KEGG" id="fth:FTH_1734"/>
<dbReference type="GO" id="GO:0005886">
    <property type="term" value="C:plasma membrane"/>
    <property type="evidence" value="ECO:0007669"/>
    <property type="project" value="UniProtKB-SubCell"/>
</dbReference>
<dbReference type="GO" id="GO:0045259">
    <property type="term" value="C:proton-transporting ATP synthase complex"/>
    <property type="evidence" value="ECO:0007669"/>
    <property type="project" value="UniProtKB-KW"/>
</dbReference>
<dbReference type="GO" id="GO:0043531">
    <property type="term" value="F:ADP binding"/>
    <property type="evidence" value="ECO:0007669"/>
    <property type="project" value="TreeGrafter"/>
</dbReference>
<dbReference type="GO" id="GO:0005524">
    <property type="term" value="F:ATP binding"/>
    <property type="evidence" value="ECO:0007669"/>
    <property type="project" value="UniProtKB-UniRule"/>
</dbReference>
<dbReference type="GO" id="GO:0046933">
    <property type="term" value="F:proton-transporting ATP synthase activity, rotational mechanism"/>
    <property type="evidence" value="ECO:0007669"/>
    <property type="project" value="UniProtKB-UniRule"/>
</dbReference>
<dbReference type="CDD" id="cd18113">
    <property type="entry name" value="ATP-synt_F1_alpha_C"/>
    <property type="match status" value="1"/>
</dbReference>
<dbReference type="CDD" id="cd18116">
    <property type="entry name" value="ATP-synt_F1_alpha_N"/>
    <property type="match status" value="1"/>
</dbReference>
<dbReference type="CDD" id="cd01132">
    <property type="entry name" value="F1-ATPase_alpha_CD"/>
    <property type="match status" value="1"/>
</dbReference>
<dbReference type="FunFam" id="1.20.150.20:FF:000001">
    <property type="entry name" value="ATP synthase subunit alpha"/>
    <property type="match status" value="1"/>
</dbReference>
<dbReference type="FunFam" id="2.40.30.20:FF:000001">
    <property type="entry name" value="ATP synthase subunit alpha"/>
    <property type="match status" value="1"/>
</dbReference>
<dbReference type="FunFam" id="3.40.50.300:FF:000002">
    <property type="entry name" value="ATP synthase subunit alpha"/>
    <property type="match status" value="1"/>
</dbReference>
<dbReference type="Gene3D" id="2.40.30.20">
    <property type="match status" value="1"/>
</dbReference>
<dbReference type="Gene3D" id="1.20.150.20">
    <property type="entry name" value="ATP synthase alpha/beta chain, C-terminal domain"/>
    <property type="match status" value="1"/>
</dbReference>
<dbReference type="Gene3D" id="3.40.50.300">
    <property type="entry name" value="P-loop containing nucleotide triphosphate hydrolases"/>
    <property type="match status" value="1"/>
</dbReference>
<dbReference type="HAMAP" id="MF_01346">
    <property type="entry name" value="ATP_synth_alpha_bact"/>
    <property type="match status" value="1"/>
</dbReference>
<dbReference type="InterPro" id="IPR023366">
    <property type="entry name" value="ATP_synth_asu-like_sf"/>
</dbReference>
<dbReference type="InterPro" id="IPR000793">
    <property type="entry name" value="ATP_synth_asu_C"/>
</dbReference>
<dbReference type="InterPro" id="IPR038376">
    <property type="entry name" value="ATP_synth_asu_C_sf"/>
</dbReference>
<dbReference type="InterPro" id="IPR033732">
    <property type="entry name" value="ATP_synth_F1_a_nt-bd_dom"/>
</dbReference>
<dbReference type="InterPro" id="IPR005294">
    <property type="entry name" value="ATP_synth_F1_asu"/>
</dbReference>
<dbReference type="InterPro" id="IPR020003">
    <property type="entry name" value="ATPase_a/bsu_AS"/>
</dbReference>
<dbReference type="InterPro" id="IPR004100">
    <property type="entry name" value="ATPase_F1/V1/A1_a/bsu_N"/>
</dbReference>
<dbReference type="InterPro" id="IPR036121">
    <property type="entry name" value="ATPase_F1/V1/A1_a/bsu_N_sf"/>
</dbReference>
<dbReference type="InterPro" id="IPR000194">
    <property type="entry name" value="ATPase_F1/V1/A1_a/bsu_nucl-bd"/>
</dbReference>
<dbReference type="InterPro" id="IPR027417">
    <property type="entry name" value="P-loop_NTPase"/>
</dbReference>
<dbReference type="NCBIfam" id="TIGR00962">
    <property type="entry name" value="atpA"/>
    <property type="match status" value="1"/>
</dbReference>
<dbReference type="NCBIfam" id="NF009884">
    <property type="entry name" value="PRK13343.1"/>
    <property type="match status" value="1"/>
</dbReference>
<dbReference type="PANTHER" id="PTHR48082">
    <property type="entry name" value="ATP SYNTHASE SUBUNIT ALPHA, MITOCHONDRIAL"/>
    <property type="match status" value="1"/>
</dbReference>
<dbReference type="PANTHER" id="PTHR48082:SF2">
    <property type="entry name" value="ATP SYNTHASE SUBUNIT ALPHA, MITOCHONDRIAL"/>
    <property type="match status" value="1"/>
</dbReference>
<dbReference type="Pfam" id="PF00006">
    <property type="entry name" value="ATP-synt_ab"/>
    <property type="match status" value="1"/>
</dbReference>
<dbReference type="Pfam" id="PF00306">
    <property type="entry name" value="ATP-synt_ab_C"/>
    <property type="match status" value="1"/>
</dbReference>
<dbReference type="Pfam" id="PF02874">
    <property type="entry name" value="ATP-synt_ab_N"/>
    <property type="match status" value="1"/>
</dbReference>
<dbReference type="PIRSF" id="PIRSF039088">
    <property type="entry name" value="F_ATPase_subunit_alpha"/>
    <property type="match status" value="1"/>
</dbReference>
<dbReference type="SUPFAM" id="SSF47917">
    <property type="entry name" value="C-terminal domain of alpha and beta subunits of F1 ATP synthase"/>
    <property type="match status" value="1"/>
</dbReference>
<dbReference type="SUPFAM" id="SSF50615">
    <property type="entry name" value="N-terminal domain of alpha and beta subunits of F1 ATP synthase"/>
    <property type="match status" value="1"/>
</dbReference>
<dbReference type="SUPFAM" id="SSF52540">
    <property type="entry name" value="P-loop containing nucleoside triphosphate hydrolases"/>
    <property type="match status" value="1"/>
</dbReference>
<dbReference type="PROSITE" id="PS00152">
    <property type="entry name" value="ATPASE_ALPHA_BETA"/>
    <property type="match status" value="1"/>
</dbReference>
<reference key="1">
    <citation type="journal article" date="2006" name="J. Bacteriol.">
        <title>Chromosome rearrangement and diversification of Francisella tularensis revealed by the type B (OSU18) genome sequence.</title>
        <authorList>
            <person name="Petrosino J.F."/>
            <person name="Xiang Q."/>
            <person name="Karpathy S.E."/>
            <person name="Jiang H."/>
            <person name="Yerrapragada S."/>
            <person name="Liu Y."/>
            <person name="Gioia J."/>
            <person name="Hemphill L."/>
            <person name="Gonzalez A."/>
            <person name="Raghavan T.M."/>
            <person name="Uzman A."/>
            <person name="Fox G.E."/>
            <person name="Highlander S."/>
            <person name="Reichard M."/>
            <person name="Morton R.J."/>
            <person name="Clinkenbeard K.D."/>
            <person name="Weinstock G.M."/>
        </authorList>
    </citation>
    <scope>NUCLEOTIDE SEQUENCE [LARGE SCALE GENOMIC DNA]</scope>
    <source>
        <strain>OSU18</strain>
    </source>
</reference>
<accession>Q0BK82</accession>
<protein>
    <recommendedName>
        <fullName evidence="1">ATP synthase subunit alpha</fullName>
        <ecNumber evidence="1">7.1.2.2</ecNumber>
    </recommendedName>
    <alternativeName>
        <fullName evidence="1">ATP synthase F1 sector subunit alpha</fullName>
    </alternativeName>
    <alternativeName>
        <fullName evidence="1">F-ATPase subunit alpha</fullName>
    </alternativeName>
</protein>
<organism>
    <name type="scientific">Francisella tularensis subsp. holarctica (strain OSU18)</name>
    <dbReference type="NCBI Taxonomy" id="393011"/>
    <lineage>
        <taxon>Bacteria</taxon>
        <taxon>Pseudomonadati</taxon>
        <taxon>Pseudomonadota</taxon>
        <taxon>Gammaproteobacteria</taxon>
        <taxon>Thiotrichales</taxon>
        <taxon>Francisellaceae</taxon>
        <taxon>Francisella</taxon>
    </lineage>
</organism>
<comment type="function">
    <text evidence="1">Produces ATP from ADP in the presence of a proton gradient across the membrane. The alpha chain is a regulatory subunit.</text>
</comment>
<comment type="catalytic activity">
    <reaction evidence="1">
        <text>ATP + H2O + 4 H(+)(in) = ADP + phosphate + 5 H(+)(out)</text>
        <dbReference type="Rhea" id="RHEA:57720"/>
        <dbReference type="ChEBI" id="CHEBI:15377"/>
        <dbReference type="ChEBI" id="CHEBI:15378"/>
        <dbReference type="ChEBI" id="CHEBI:30616"/>
        <dbReference type="ChEBI" id="CHEBI:43474"/>
        <dbReference type="ChEBI" id="CHEBI:456216"/>
        <dbReference type="EC" id="7.1.2.2"/>
    </reaction>
</comment>
<comment type="subunit">
    <text evidence="1">F-type ATPases have 2 components, CF(1) - the catalytic core - and CF(0) - the membrane proton channel. CF(1) has five subunits: alpha(3), beta(3), gamma(1), delta(1), epsilon(1). CF(0) has three main subunits: a(1), b(2) and c(9-12). The alpha and beta chains form an alternating ring which encloses part of the gamma chain. CF(1) is attached to CF(0) by a central stalk formed by the gamma and epsilon chains, while a peripheral stalk is formed by the delta and b chains.</text>
</comment>
<comment type="subcellular location">
    <subcellularLocation>
        <location evidence="1">Cell inner membrane</location>
        <topology evidence="1">Peripheral membrane protein</topology>
    </subcellularLocation>
</comment>
<comment type="similarity">
    <text evidence="1">Belongs to the ATPase alpha/beta chains family.</text>
</comment>
<keyword id="KW-0066">ATP synthesis</keyword>
<keyword id="KW-0067">ATP-binding</keyword>
<keyword id="KW-0997">Cell inner membrane</keyword>
<keyword id="KW-1003">Cell membrane</keyword>
<keyword id="KW-0139">CF(1)</keyword>
<keyword id="KW-0375">Hydrogen ion transport</keyword>
<keyword id="KW-0406">Ion transport</keyword>
<keyword id="KW-0472">Membrane</keyword>
<keyword id="KW-0547">Nucleotide-binding</keyword>
<keyword id="KW-1278">Translocase</keyword>
<keyword id="KW-0813">Transport</keyword>
<proteinExistence type="inferred from homology"/>
<feature type="chain" id="PRO_0000302646" description="ATP synthase subunit alpha">
    <location>
        <begin position="1"/>
        <end position="513"/>
    </location>
</feature>
<feature type="binding site" evidence="1">
    <location>
        <begin position="169"/>
        <end position="176"/>
    </location>
    <ligand>
        <name>ATP</name>
        <dbReference type="ChEBI" id="CHEBI:30616"/>
    </ligand>
</feature>
<feature type="site" description="Required for activity" evidence="1">
    <location>
        <position position="373"/>
    </location>
</feature>
<evidence type="ECO:0000255" key="1">
    <source>
        <dbReference type="HAMAP-Rule" id="MF_01346"/>
    </source>
</evidence>
<name>ATPA_FRATO</name>
<sequence length="513" mass="55536">MQLSPSEISGLIKQRIEKFDNSVELKSEGTIVSVADGIVTIYGLNDVTAGEMIKLPGDVYGLALNLNTDSVGAVVLGDYEHIKEGDKAYCTGRILEVPVGEALLGRVVDALGNPIDGKGEVATDLTSPIEKIAPGVIWRKSVDQALQTGIKSIDSMVPIGRGQRELIIGDRQIGKTAIAVDTIINQKGTGVKCIYVAIGQKASTIANIVRQLEEYGAMEHTIIVAATASDSAALQYIAPYAGCSMGEYFRDRGQDALIVYDDLTKQAWAYRQISLLLRRPPGREAYPGDVFYLHSRLLERAARVNEEYVEKFTNGEVKGKTGSLTALPIIETQAGDISAFVPTNVISITDGQIFLETDLFNSGLRPAINPGNSVSRVGGAAQTKIIKKLGGGIRLALAQYRELEAFSQFASDLDEATRAQLNRGQRVTELLKQKQFSTLSVALMALSLYAADNGYLDNLEVSEVIPFESALHALAETKYSDVIAEINETDKYDADIADKLKIIVEDCKANQAW</sequence>
<gene>
    <name evidence="1" type="primary">atpA</name>
    <name type="ordered locus">FTH_1734</name>
</gene>